<accession>Q9L1P4</accession>
<organism>
    <name type="scientific">Streptomyces coelicolor (strain ATCC BAA-471 / A3(2) / M145)</name>
    <dbReference type="NCBI Taxonomy" id="100226"/>
    <lineage>
        <taxon>Bacteria</taxon>
        <taxon>Bacillati</taxon>
        <taxon>Actinomycetota</taxon>
        <taxon>Actinomycetes</taxon>
        <taxon>Kitasatosporales</taxon>
        <taxon>Streptomycetaceae</taxon>
        <taxon>Streptomyces</taxon>
        <taxon>Streptomyces albidoflavus group</taxon>
    </lineage>
</organism>
<gene>
    <name type="ordered locus">SCO6871</name>
    <name type="ORF">SC7F9.23c</name>
</gene>
<proteinExistence type="inferred from homology"/>
<evidence type="ECO:0000255" key="1"/>
<evidence type="ECO:0000256" key="2">
    <source>
        <dbReference type="SAM" id="MobiDB-lite"/>
    </source>
</evidence>
<evidence type="ECO:0000305" key="3"/>
<comment type="subcellular location">
    <subcellularLocation>
        <location evidence="3">Cell membrane</location>
        <topology evidence="3">Lipid-anchor</topology>
    </subcellularLocation>
</comment>
<reference key="1">
    <citation type="journal article" date="2002" name="Nature">
        <title>Complete genome sequence of the model actinomycete Streptomyces coelicolor A3(2).</title>
        <authorList>
            <person name="Bentley S.D."/>
            <person name="Chater K.F."/>
            <person name="Cerdeno-Tarraga A.-M."/>
            <person name="Challis G.L."/>
            <person name="Thomson N.R."/>
            <person name="James K.D."/>
            <person name="Harris D.E."/>
            <person name="Quail M.A."/>
            <person name="Kieser H."/>
            <person name="Harper D."/>
            <person name="Bateman A."/>
            <person name="Brown S."/>
            <person name="Chandra G."/>
            <person name="Chen C.W."/>
            <person name="Collins M."/>
            <person name="Cronin A."/>
            <person name="Fraser A."/>
            <person name="Goble A."/>
            <person name="Hidalgo J."/>
            <person name="Hornsby T."/>
            <person name="Howarth S."/>
            <person name="Huang C.-H."/>
            <person name="Kieser T."/>
            <person name="Larke L."/>
            <person name="Murphy L.D."/>
            <person name="Oliver K."/>
            <person name="O'Neil S."/>
            <person name="Rabbinowitsch E."/>
            <person name="Rajandream M.A."/>
            <person name="Rutherford K.M."/>
            <person name="Rutter S."/>
            <person name="Seeger K."/>
            <person name="Saunders D."/>
            <person name="Sharp S."/>
            <person name="Squares R."/>
            <person name="Squares S."/>
            <person name="Taylor K."/>
            <person name="Warren T."/>
            <person name="Wietzorrek A."/>
            <person name="Woodward J.R."/>
            <person name="Barrell B.G."/>
            <person name="Parkhill J."/>
            <person name="Hopwood D.A."/>
        </authorList>
    </citation>
    <scope>NUCLEOTIDE SEQUENCE [LARGE SCALE GENOMIC DNA]</scope>
    <source>
        <strain>ATCC BAA-471 / A3(2) / M145</strain>
    </source>
</reference>
<sequence>MESPIRTARRTLPLLIGATCLVLALTGCAGEDGPAQARPTPSASTSPKQAPALSAAQARDVITRYSKINNEANADLDRRQLDTVEDGPLYAMSVSDYTETEGLPAKDREPYKRWSYDLASAKLYIPRLAAGQERWFAAALSSEKGKAPSRLAVFAELPRHKRWEMVSVVDLDSQKLPDVALDREGYATAVPANDNKHLAADANLLRTAVLDNFATGGTNTGTKVFAPTKASKRQIKVHSDAATRFGDKGTSVFDGADNRFTDAYALKTADGGALILFSHTHTQTDAVAHSGLQINPGKDDRAWLHDVPRTSITYTFICNDAATVPAKSQPSRLIGYTCARTNASGPPLPSWTARA</sequence>
<protein>
    <recommendedName>
        <fullName>Uncharacterized lipoprotein SCO6871</fullName>
    </recommendedName>
</protein>
<name>Y6871_STRCO</name>
<dbReference type="EMBL" id="AL939129">
    <property type="protein sequence ID" value="CAB72376.1"/>
    <property type="molecule type" value="Genomic_DNA"/>
</dbReference>
<dbReference type="RefSeq" id="NP_630941.1">
    <property type="nucleotide sequence ID" value="NC_003888.3"/>
</dbReference>
<dbReference type="RefSeq" id="WP_011031256.1">
    <property type="nucleotide sequence ID" value="NZ_VNID01000002.1"/>
</dbReference>
<dbReference type="STRING" id="100226.gene:17764530"/>
<dbReference type="PaxDb" id="100226-SCO6871"/>
<dbReference type="KEGG" id="sco:SCO6871"/>
<dbReference type="PATRIC" id="fig|100226.15.peg.6983"/>
<dbReference type="eggNOG" id="ENOG5032D5E">
    <property type="taxonomic scope" value="Bacteria"/>
</dbReference>
<dbReference type="HOGENOM" id="CLU_067337_0_0_11"/>
<dbReference type="InParanoid" id="Q9L1P4"/>
<dbReference type="OrthoDB" id="3295569at2"/>
<dbReference type="Proteomes" id="UP000001973">
    <property type="component" value="Chromosome"/>
</dbReference>
<dbReference type="GO" id="GO:0005886">
    <property type="term" value="C:plasma membrane"/>
    <property type="evidence" value="ECO:0007669"/>
    <property type="project" value="UniProtKB-SubCell"/>
</dbReference>
<feature type="signal peptide" evidence="1">
    <location>
        <begin position="1"/>
        <end position="27"/>
    </location>
</feature>
<feature type="chain" id="PRO_0000253348" description="Uncharacterized lipoprotein SCO6871">
    <location>
        <begin position="28"/>
        <end position="355"/>
    </location>
</feature>
<feature type="region of interest" description="Disordered" evidence="2">
    <location>
        <begin position="33"/>
        <end position="53"/>
    </location>
</feature>
<feature type="compositionally biased region" description="Polar residues" evidence="2">
    <location>
        <begin position="39"/>
        <end position="48"/>
    </location>
</feature>
<feature type="lipid moiety-binding region" description="N-palmitoyl cysteine" evidence="1">
    <location>
        <position position="28"/>
    </location>
</feature>
<feature type="lipid moiety-binding region" description="S-diacylglycerol cysteine" evidence="1">
    <location>
        <position position="28"/>
    </location>
</feature>
<keyword id="KW-1003">Cell membrane</keyword>
<keyword id="KW-0449">Lipoprotein</keyword>
<keyword id="KW-0472">Membrane</keyword>
<keyword id="KW-0564">Palmitate</keyword>
<keyword id="KW-1185">Reference proteome</keyword>
<keyword id="KW-0732">Signal</keyword>